<dbReference type="EC" id="2.1.1.173" evidence="1"/>
<dbReference type="EC" id="2.1.1.264" evidence="1"/>
<dbReference type="EMBL" id="CP000947">
    <property type="protein sequence ID" value="ACA31249.1"/>
    <property type="molecule type" value="Genomic_DNA"/>
</dbReference>
<dbReference type="RefSeq" id="WP_012340636.1">
    <property type="nucleotide sequence ID" value="NC_010519.1"/>
</dbReference>
<dbReference type="SMR" id="B0UUM5"/>
<dbReference type="STRING" id="228400.HSM_1498"/>
<dbReference type="GeneID" id="31487800"/>
<dbReference type="KEGG" id="hsm:HSM_1498"/>
<dbReference type="HOGENOM" id="CLU_014042_2_0_6"/>
<dbReference type="GO" id="GO:0005737">
    <property type="term" value="C:cytoplasm"/>
    <property type="evidence" value="ECO:0007669"/>
    <property type="project" value="UniProtKB-SubCell"/>
</dbReference>
<dbReference type="GO" id="GO:0052915">
    <property type="term" value="F:23S rRNA (guanine(2445)-N(2))-methyltransferase activity"/>
    <property type="evidence" value="ECO:0007669"/>
    <property type="project" value="UniProtKB-UniRule"/>
</dbReference>
<dbReference type="GO" id="GO:0003723">
    <property type="term" value="F:RNA binding"/>
    <property type="evidence" value="ECO:0007669"/>
    <property type="project" value="UniProtKB-KW"/>
</dbReference>
<dbReference type="GO" id="GO:0070043">
    <property type="term" value="F:rRNA (guanine-N7-)-methyltransferase activity"/>
    <property type="evidence" value="ECO:0007669"/>
    <property type="project" value="UniProtKB-UniRule"/>
</dbReference>
<dbReference type="CDD" id="cd02440">
    <property type="entry name" value="AdoMet_MTases"/>
    <property type="match status" value="1"/>
</dbReference>
<dbReference type="CDD" id="cd11715">
    <property type="entry name" value="THUMP_AdoMetMT"/>
    <property type="match status" value="1"/>
</dbReference>
<dbReference type="FunFam" id="3.30.750.80:FF:000001">
    <property type="entry name" value="Ribosomal RNA large subunit methyltransferase K/L"/>
    <property type="match status" value="1"/>
</dbReference>
<dbReference type="FunFam" id="3.40.50.150:FF:000039">
    <property type="entry name" value="Ribosomal RNA large subunit methyltransferase K/L"/>
    <property type="match status" value="1"/>
</dbReference>
<dbReference type="Gene3D" id="3.30.2130.30">
    <property type="match status" value="1"/>
</dbReference>
<dbReference type="Gene3D" id="3.30.750.80">
    <property type="entry name" value="RNA methyltransferase domain (HRMD) like"/>
    <property type="match status" value="1"/>
</dbReference>
<dbReference type="Gene3D" id="3.40.50.150">
    <property type="entry name" value="Vaccinia Virus protein VP39"/>
    <property type="match status" value="2"/>
</dbReference>
<dbReference type="HAMAP" id="MF_01858">
    <property type="entry name" value="23SrRNA_methyltr_KL"/>
    <property type="match status" value="1"/>
</dbReference>
<dbReference type="InterPro" id="IPR017244">
    <property type="entry name" value="23SrRNA_methyltr_KL"/>
</dbReference>
<dbReference type="InterPro" id="IPR002052">
    <property type="entry name" value="DNA_methylase_N6_adenine_CS"/>
</dbReference>
<dbReference type="InterPro" id="IPR000241">
    <property type="entry name" value="RlmKL-like_Mtase"/>
</dbReference>
<dbReference type="InterPro" id="IPR053943">
    <property type="entry name" value="RlmKL-like_Mtase_CS"/>
</dbReference>
<dbReference type="InterPro" id="IPR054170">
    <property type="entry name" value="RlmL_1st"/>
</dbReference>
<dbReference type="InterPro" id="IPR019614">
    <property type="entry name" value="SAM-dep_methyl-trfase"/>
</dbReference>
<dbReference type="InterPro" id="IPR029063">
    <property type="entry name" value="SAM-dependent_MTases_sf"/>
</dbReference>
<dbReference type="InterPro" id="IPR004114">
    <property type="entry name" value="THUMP_dom"/>
</dbReference>
<dbReference type="NCBIfam" id="NF008748">
    <property type="entry name" value="PRK11783.1"/>
    <property type="match status" value="1"/>
</dbReference>
<dbReference type="PANTHER" id="PTHR47313">
    <property type="entry name" value="RIBOSOMAL RNA LARGE SUBUNIT METHYLTRANSFERASE K/L"/>
    <property type="match status" value="1"/>
</dbReference>
<dbReference type="PANTHER" id="PTHR47313:SF1">
    <property type="entry name" value="RIBOSOMAL RNA LARGE SUBUNIT METHYLTRANSFERASE K_L"/>
    <property type="match status" value="1"/>
</dbReference>
<dbReference type="Pfam" id="PF10672">
    <property type="entry name" value="Methyltrans_SAM"/>
    <property type="match status" value="1"/>
</dbReference>
<dbReference type="Pfam" id="PF22020">
    <property type="entry name" value="RlmL_1st"/>
    <property type="match status" value="1"/>
</dbReference>
<dbReference type="Pfam" id="PF02926">
    <property type="entry name" value="THUMP"/>
    <property type="match status" value="1"/>
</dbReference>
<dbReference type="Pfam" id="PF01170">
    <property type="entry name" value="UPF0020"/>
    <property type="match status" value="1"/>
</dbReference>
<dbReference type="PIRSF" id="PIRSF037618">
    <property type="entry name" value="RNA_Mtase_bacteria_prd"/>
    <property type="match status" value="1"/>
</dbReference>
<dbReference type="SMART" id="SM00981">
    <property type="entry name" value="THUMP"/>
    <property type="match status" value="1"/>
</dbReference>
<dbReference type="SUPFAM" id="SSF53335">
    <property type="entry name" value="S-adenosyl-L-methionine-dependent methyltransferases"/>
    <property type="match status" value="2"/>
</dbReference>
<dbReference type="PROSITE" id="PS51165">
    <property type="entry name" value="THUMP"/>
    <property type="match status" value="1"/>
</dbReference>
<dbReference type="PROSITE" id="PS01261">
    <property type="entry name" value="UPF0020"/>
    <property type="match status" value="1"/>
</dbReference>
<name>RLMKL_HISS2</name>
<reference key="1">
    <citation type="submission" date="2008-02" db="EMBL/GenBank/DDBJ databases">
        <title>Complete sequence of Haemophilus somnus 2336.</title>
        <authorList>
            <consortium name="US DOE Joint Genome Institute"/>
            <person name="Siddaramappa S."/>
            <person name="Duncan A.J."/>
            <person name="Challacombe J.F."/>
            <person name="Rainey D."/>
            <person name="Gillaspy A.F."/>
            <person name="Carson M."/>
            <person name="Gipson J."/>
            <person name="Gipson M."/>
            <person name="Bruce D."/>
            <person name="Detter J.C."/>
            <person name="Han C.S."/>
            <person name="Land M."/>
            <person name="Tapia R."/>
            <person name="Thompson L.S."/>
            <person name="Orvis J."/>
            <person name="Zaitshik J."/>
            <person name="Barnes G."/>
            <person name="Brettin T.S."/>
            <person name="Dyer D.W."/>
            <person name="Inzana T.J."/>
        </authorList>
    </citation>
    <scope>NUCLEOTIDE SEQUENCE [LARGE SCALE GENOMIC DNA]</scope>
    <source>
        <strain>2336</strain>
    </source>
</reference>
<evidence type="ECO:0000255" key="1">
    <source>
        <dbReference type="HAMAP-Rule" id="MF_01858"/>
    </source>
</evidence>
<proteinExistence type="inferred from homology"/>
<sequence>MKQLFATTSRGFEELLKVELTDLGAQECRVVQGGVHFIANDETQYRILLWSRLSSRILLPLITTKIYSDLDLYSAIVGQNWLTHFDERVTFLVDFNGTNREIRHTQFGAMRVKDGIVDYFERHGKTRPNVDKEYPDIRIHAYLNQDELVVSLDLSGEALHLRGYREDTGKAPLRETLAAAIVLRSSWEKGTPLVDPMCGSGTLLIEAAQMEAQIAPQLHRLHWGFDFWKGHNQVVWEKVKQEAVELAEQAFNRKLTPHFWGFDLDHRVLKKAQKNAQNAGVSHLIKWQQGDVAGLKNPTEQEIGTVICNPPYGERLGTTPALIALYSVFGRQLKTEFADWNVSIFSGEPALLDCLRLRAYRQFKAKNGPLDCVQKNYHIAVRKQVESAVENSQEKTLTFVSENTQVAQDFANRLRKNIKKIDKWANQQKLDAYRLYDADLPEYNLAVDRYADHIIVQEYAAPKNVDENKARQRLLDAVSAILSVTGIETNKLILKVRQKQKGTSQYEKLANKGEYFYVHEYGAKLWVNLTDYLDTGLFLDHRLTRKMLGEMAVGKDFLNLFAYTGSATVHAALGLAKSTTTVDMSNTYLNWAEQNLLLNDIEGKQHKLIQADCLQWLNKCDRQFDLIFVDPPTFSNSKRMEDSWDVQRDHIKLMANLKRILRTNGTIVFSNNKRGFKMDIDGLQELELSAVEISAKTLPLDFERNKQIHNCWIIRHQS</sequence>
<feature type="chain" id="PRO_0000366764" description="Ribosomal RNA large subunit methyltransferase K/L">
    <location>
        <begin position="1"/>
        <end position="718"/>
    </location>
</feature>
<feature type="domain" description="THUMP" evidence="1">
    <location>
        <begin position="43"/>
        <end position="154"/>
    </location>
</feature>
<organism>
    <name type="scientific">Histophilus somni (strain 2336)</name>
    <name type="common">Haemophilus somnus</name>
    <dbReference type="NCBI Taxonomy" id="228400"/>
    <lineage>
        <taxon>Bacteria</taxon>
        <taxon>Pseudomonadati</taxon>
        <taxon>Pseudomonadota</taxon>
        <taxon>Gammaproteobacteria</taxon>
        <taxon>Pasteurellales</taxon>
        <taxon>Pasteurellaceae</taxon>
        <taxon>Histophilus</taxon>
    </lineage>
</organism>
<comment type="function">
    <text evidence="1">Specifically methylates the guanine in position 2445 (m2G2445) and the guanine in position 2069 (m7G2069) of 23S rRNA.</text>
</comment>
<comment type="catalytic activity">
    <reaction evidence="1">
        <text>guanosine(2445) in 23S rRNA + S-adenosyl-L-methionine = N(2)-methylguanosine(2445) in 23S rRNA + S-adenosyl-L-homocysteine + H(+)</text>
        <dbReference type="Rhea" id="RHEA:42740"/>
        <dbReference type="Rhea" id="RHEA-COMP:10215"/>
        <dbReference type="Rhea" id="RHEA-COMP:10216"/>
        <dbReference type="ChEBI" id="CHEBI:15378"/>
        <dbReference type="ChEBI" id="CHEBI:57856"/>
        <dbReference type="ChEBI" id="CHEBI:59789"/>
        <dbReference type="ChEBI" id="CHEBI:74269"/>
        <dbReference type="ChEBI" id="CHEBI:74481"/>
        <dbReference type="EC" id="2.1.1.173"/>
    </reaction>
</comment>
<comment type="catalytic activity">
    <reaction evidence="1">
        <text>guanosine(2069) in 23S rRNA + S-adenosyl-L-methionine = N(2)-methylguanosine(2069) in 23S rRNA + S-adenosyl-L-homocysteine + H(+)</text>
        <dbReference type="Rhea" id="RHEA:43772"/>
        <dbReference type="Rhea" id="RHEA-COMP:10688"/>
        <dbReference type="Rhea" id="RHEA-COMP:10689"/>
        <dbReference type="ChEBI" id="CHEBI:15378"/>
        <dbReference type="ChEBI" id="CHEBI:57856"/>
        <dbReference type="ChEBI" id="CHEBI:59789"/>
        <dbReference type="ChEBI" id="CHEBI:74269"/>
        <dbReference type="ChEBI" id="CHEBI:74481"/>
        <dbReference type="EC" id="2.1.1.264"/>
    </reaction>
</comment>
<comment type="subcellular location">
    <subcellularLocation>
        <location evidence="1">Cytoplasm</location>
    </subcellularLocation>
</comment>
<comment type="similarity">
    <text evidence="1">Belongs to the methyltransferase superfamily. RlmKL family.</text>
</comment>
<keyword id="KW-0963">Cytoplasm</keyword>
<keyword id="KW-0489">Methyltransferase</keyword>
<keyword id="KW-0694">RNA-binding</keyword>
<keyword id="KW-0698">rRNA processing</keyword>
<keyword id="KW-0949">S-adenosyl-L-methionine</keyword>
<keyword id="KW-0808">Transferase</keyword>
<gene>
    <name evidence="1" type="primary">rlmL</name>
    <name type="ordered locus">HSM_1498</name>
</gene>
<accession>B0UUM5</accession>
<protein>
    <recommendedName>
        <fullName evidence="1">Ribosomal RNA large subunit methyltransferase K/L</fullName>
    </recommendedName>
    <domain>
        <recommendedName>
            <fullName evidence="1">23S rRNA m2G2445 methyltransferase</fullName>
            <ecNumber evidence="1">2.1.1.173</ecNumber>
        </recommendedName>
        <alternativeName>
            <fullName evidence="1">rRNA (guanine-N(2)-)-methyltransferase RlmL</fullName>
        </alternativeName>
    </domain>
    <domain>
        <recommendedName>
            <fullName evidence="1">23S rRNA m7G2069 methyltransferase</fullName>
            <ecNumber evidence="1">2.1.1.264</ecNumber>
        </recommendedName>
        <alternativeName>
            <fullName evidence="1">rRNA (guanine-N(7)-)-methyltransferase RlmK</fullName>
        </alternativeName>
    </domain>
</protein>